<keyword id="KW-0249">Electron transport</keyword>
<keyword id="KW-0349">Heme</keyword>
<keyword id="KW-0408">Iron</keyword>
<keyword id="KW-0472">Membrane</keyword>
<keyword id="KW-0479">Metal-binding</keyword>
<keyword id="KW-0496">Mitochondrion</keyword>
<keyword id="KW-0999">Mitochondrion inner membrane</keyword>
<keyword id="KW-0679">Respiratory chain</keyword>
<keyword id="KW-0812">Transmembrane</keyword>
<keyword id="KW-1133">Transmembrane helix</keyword>
<keyword id="KW-0813">Transport</keyword>
<keyword id="KW-0830">Ubiquinone</keyword>
<evidence type="ECO:0000250" key="1"/>
<evidence type="ECO:0000250" key="2">
    <source>
        <dbReference type="UniProtKB" id="P00157"/>
    </source>
</evidence>
<evidence type="ECO:0000255" key="3">
    <source>
        <dbReference type="PROSITE-ProRule" id="PRU00967"/>
    </source>
</evidence>
<evidence type="ECO:0000255" key="4">
    <source>
        <dbReference type="PROSITE-ProRule" id="PRU00968"/>
    </source>
</evidence>
<evidence type="ECO:0000305" key="5"/>
<organism>
    <name type="scientific">Fukomys damarensis</name>
    <name type="common">Damaraland mole rat</name>
    <name type="synonym">Cryptomys damarensis</name>
    <dbReference type="NCBI Taxonomy" id="885580"/>
    <lineage>
        <taxon>Eukaryota</taxon>
        <taxon>Metazoa</taxon>
        <taxon>Chordata</taxon>
        <taxon>Craniata</taxon>
        <taxon>Vertebrata</taxon>
        <taxon>Euteleostomi</taxon>
        <taxon>Mammalia</taxon>
        <taxon>Eutheria</taxon>
        <taxon>Euarchontoglires</taxon>
        <taxon>Glires</taxon>
        <taxon>Rodentia</taxon>
        <taxon>Hystricomorpha</taxon>
        <taxon>Bathyergidae</taxon>
        <taxon>Fukomys</taxon>
    </lineage>
</organism>
<dbReference type="EMBL" id="AF012220">
    <property type="protein sequence ID" value="AAC53464.1"/>
    <property type="molecule type" value="Genomic_DNA"/>
</dbReference>
<dbReference type="EMBL" id="AF012222">
    <property type="protein sequence ID" value="AAC53466.1"/>
    <property type="molecule type" value="Genomic_DNA"/>
</dbReference>
<dbReference type="EMBL" id="AF012223">
    <property type="protein sequence ID" value="AAC53467.1"/>
    <property type="molecule type" value="Genomic_DNA"/>
</dbReference>
<dbReference type="EMBL" id="AF012224">
    <property type="protein sequence ID" value="AAC53468.1"/>
    <property type="molecule type" value="Genomic_DNA"/>
</dbReference>
<dbReference type="EMBL" id="U87526">
    <property type="protein sequence ID" value="AAC53269.1"/>
    <property type="molecule type" value="Genomic_DNA"/>
</dbReference>
<dbReference type="SMR" id="O21795"/>
<dbReference type="STRING" id="885580.ENSFDAP00000000013"/>
<dbReference type="GO" id="GO:0005743">
    <property type="term" value="C:mitochondrial inner membrane"/>
    <property type="evidence" value="ECO:0007669"/>
    <property type="project" value="UniProtKB-SubCell"/>
</dbReference>
<dbReference type="GO" id="GO:0045275">
    <property type="term" value="C:respiratory chain complex III"/>
    <property type="evidence" value="ECO:0007669"/>
    <property type="project" value="InterPro"/>
</dbReference>
<dbReference type="GO" id="GO:0046872">
    <property type="term" value="F:metal ion binding"/>
    <property type="evidence" value="ECO:0007669"/>
    <property type="project" value="UniProtKB-KW"/>
</dbReference>
<dbReference type="GO" id="GO:0008121">
    <property type="term" value="F:ubiquinol-cytochrome-c reductase activity"/>
    <property type="evidence" value="ECO:0007669"/>
    <property type="project" value="InterPro"/>
</dbReference>
<dbReference type="GO" id="GO:0006122">
    <property type="term" value="P:mitochondrial electron transport, ubiquinol to cytochrome c"/>
    <property type="evidence" value="ECO:0007669"/>
    <property type="project" value="TreeGrafter"/>
</dbReference>
<dbReference type="CDD" id="cd00290">
    <property type="entry name" value="cytochrome_b_C"/>
    <property type="match status" value="1"/>
</dbReference>
<dbReference type="CDD" id="cd00284">
    <property type="entry name" value="Cytochrome_b_N"/>
    <property type="match status" value="1"/>
</dbReference>
<dbReference type="FunFam" id="1.20.810.10:FF:000002">
    <property type="entry name" value="Cytochrome b"/>
    <property type="match status" value="1"/>
</dbReference>
<dbReference type="Gene3D" id="1.20.810.10">
    <property type="entry name" value="Cytochrome Bc1 Complex, Chain C"/>
    <property type="match status" value="1"/>
</dbReference>
<dbReference type="InterPro" id="IPR005798">
    <property type="entry name" value="Cyt_b/b6_C"/>
</dbReference>
<dbReference type="InterPro" id="IPR036150">
    <property type="entry name" value="Cyt_b/b6_C_sf"/>
</dbReference>
<dbReference type="InterPro" id="IPR005797">
    <property type="entry name" value="Cyt_b/b6_N"/>
</dbReference>
<dbReference type="InterPro" id="IPR027387">
    <property type="entry name" value="Cytb/b6-like_sf"/>
</dbReference>
<dbReference type="InterPro" id="IPR030689">
    <property type="entry name" value="Cytochrome_b"/>
</dbReference>
<dbReference type="InterPro" id="IPR048260">
    <property type="entry name" value="Cytochrome_b_C_euk/bac"/>
</dbReference>
<dbReference type="InterPro" id="IPR048259">
    <property type="entry name" value="Cytochrome_b_N_euk/bac"/>
</dbReference>
<dbReference type="InterPro" id="IPR016174">
    <property type="entry name" value="Di-haem_cyt_TM"/>
</dbReference>
<dbReference type="PANTHER" id="PTHR19271">
    <property type="entry name" value="CYTOCHROME B"/>
    <property type="match status" value="1"/>
</dbReference>
<dbReference type="PANTHER" id="PTHR19271:SF16">
    <property type="entry name" value="CYTOCHROME B"/>
    <property type="match status" value="1"/>
</dbReference>
<dbReference type="Pfam" id="PF00032">
    <property type="entry name" value="Cytochrom_B_C"/>
    <property type="match status" value="1"/>
</dbReference>
<dbReference type="Pfam" id="PF00033">
    <property type="entry name" value="Cytochrome_B"/>
    <property type="match status" value="1"/>
</dbReference>
<dbReference type="PIRSF" id="PIRSF038885">
    <property type="entry name" value="COB"/>
    <property type="match status" value="1"/>
</dbReference>
<dbReference type="SUPFAM" id="SSF81648">
    <property type="entry name" value="a domain/subunit of cytochrome bc1 complex (Ubiquinol-cytochrome c reductase)"/>
    <property type="match status" value="1"/>
</dbReference>
<dbReference type="SUPFAM" id="SSF81342">
    <property type="entry name" value="Transmembrane di-heme cytochromes"/>
    <property type="match status" value="1"/>
</dbReference>
<dbReference type="PROSITE" id="PS51003">
    <property type="entry name" value="CYTB_CTER"/>
    <property type="match status" value="1"/>
</dbReference>
<dbReference type="PROSITE" id="PS51002">
    <property type="entry name" value="CYTB_NTER"/>
    <property type="match status" value="1"/>
</dbReference>
<feature type="chain" id="PRO_0000060835" description="Cytochrome b">
    <location>
        <begin position="1"/>
        <end position="379"/>
    </location>
</feature>
<feature type="transmembrane region" description="Helical" evidence="2">
    <location>
        <begin position="33"/>
        <end position="53"/>
    </location>
</feature>
<feature type="transmembrane region" description="Helical" evidence="2">
    <location>
        <begin position="77"/>
        <end position="98"/>
    </location>
</feature>
<feature type="transmembrane region" description="Helical" evidence="2">
    <location>
        <begin position="113"/>
        <end position="133"/>
    </location>
</feature>
<feature type="transmembrane region" description="Helical" evidence="2">
    <location>
        <begin position="178"/>
        <end position="198"/>
    </location>
</feature>
<feature type="transmembrane region" description="Helical" evidence="2">
    <location>
        <begin position="226"/>
        <end position="246"/>
    </location>
</feature>
<feature type="transmembrane region" description="Helical" evidence="2">
    <location>
        <begin position="288"/>
        <end position="308"/>
    </location>
</feature>
<feature type="transmembrane region" description="Helical" evidence="2">
    <location>
        <begin position="320"/>
        <end position="340"/>
    </location>
</feature>
<feature type="transmembrane region" description="Helical" evidence="2">
    <location>
        <begin position="347"/>
        <end position="367"/>
    </location>
</feature>
<feature type="binding site" description="axial binding residue" evidence="2">
    <location>
        <position position="83"/>
    </location>
    <ligand>
        <name>heme b</name>
        <dbReference type="ChEBI" id="CHEBI:60344"/>
        <label>b562</label>
    </ligand>
    <ligandPart>
        <name>Fe</name>
        <dbReference type="ChEBI" id="CHEBI:18248"/>
    </ligandPart>
</feature>
<feature type="binding site" description="axial binding residue" evidence="2">
    <location>
        <position position="97"/>
    </location>
    <ligand>
        <name>heme b</name>
        <dbReference type="ChEBI" id="CHEBI:60344"/>
        <label>b566</label>
    </ligand>
    <ligandPart>
        <name>Fe</name>
        <dbReference type="ChEBI" id="CHEBI:18248"/>
    </ligandPart>
</feature>
<feature type="binding site" description="axial binding residue" evidence="2">
    <location>
        <position position="182"/>
    </location>
    <ligand>
        <name>heme b</name>
        <dbReference type="ChEBI" id="CHEBI:60344"/>
        <label>b562</label>
    </ligand>
    <ligandPart>
        <name>Fe</name>
        <dbReference type="ChEBI" id="CHEBI:18248"/>
    </ligandPart>
</feature>
<feature type="binding site" description="axial binding residue" evidence="2">
    <location>
        <position position="196"/>
    </location>
    <ligand>
        <name>heme b</name>
        <dbReference type="ChEBI" id="CHEBI:60344"/>
        <label>b566</label>
    </ligand>
    <ligandPart>
        <name>Fe</name>
        <dbReference type="ChEBI" id="CHEBI:18248"/>
    </ligandPart>
</feature>
<feature type="binding site" evidence="2">
    <location>
        <position position="201"/>
    </location>
    <ligand>
        <name>a ubiquinone</name>
        <dbReference type="ChEBI" id="CHEBI:16389"/>
    </ligand>
</feature>
<feature type="sequence conflict" description="In Ref. 2; AAC53269." evidence="5" ref="2">
    <original>LALVLS</original>
    <variation>ISISHT</variation>
    <location>
        <begin position="292"/>
        <end position="297"/>
    </location>
</feature>
<feature type="sequence conflict" description="In Ref. 2; AAC53269." evidence="5" ref="2">
    <original>LS</original>
    <variation>HT</variation>
    <location>
        <begin position="353"/>
        <end position="354"/>
    </location>
</feature>
<sequence length="379" mass="43098">MTNIRKSHPLMKIINHSFIDLPTPSNISSWWNFGSLLGICLILQIVTGLFLAMHYTADTTTAFSSVAHICRDVNYGWLIRYVHANGASMFFICLYVHVGRGIYYGSYMFTETWNMGVILLFSVMATAFMGYVLPWGQMSFWGATVITNLLSAIPYIGTSLVEWIWGGFSVDKATLTRFFAFHFILPFIITALTVVHLLFLHETGSNNPSGIDSDSDKIPFHPYYTIKDFMGFLFVFIILLTLVLFSPDLLGDPDNLYPANPLNTPPHIKPEWYFLFAYAILRSIPNKLGGVLALVLSIVILIIMPLLHTSKQRSMMFRPMSQCLFWILVANLLTLTWIGSQPVEHPYILIGQLSSMLYFTIILILMPLVSMMENKMLKW</sequence>
<reference key="1">
    <citation type="journal article" date="1997" name="Proc. R. Soc. B">
        <title>Ecological constraints drive social evolution in the African mole-rats.</title>
        <authorList>
            <person name="Faulkes C.G."/>
            <person name="Bennett N.C."/>
            <person name="Bruford M.W."/>
            <person name="O'Brien H.P."/>
            <person name="Aguilar G.H."/>
            <person name="Jarvis J.U.M."/>
        </authorList>
    </citation>
    <scope>NUCLEOTIDE SEQUENCE [GENOMIC DNA]</scope>
    <source>
        <strain>Isolate 240</strain>
        <strain>Isolate 268</strain>
        <strain>Isolate 281</strain>
        <strain>Isolate 372</strain>
    </source>
</reference>
<reference key="2">
    <citation type="journal article" date="1997" name="Mol. Ecol.">
        <title>Micro- and macrogeographical genetic structure of colonies of naked mole-rats Heterocephalus glaber.</title>
        <authorList>
            <person name="Faulkes C.G."/>
            <person name="Abbott D.H."/>
            <person name="O'Brien H.P."/>
            <person name="Lau L."/>
            <person name="Roy M.R."/>
            <person name="Wayne R.K."/>
            <person name="Bruford M.W."/>
        </authorList>
    </citation>
    <scope>NUCLEOTIDE SEQUENCE [GENOMIC DNA]</scope>
</reference>
<accession>O21795</accession>
<accession>O21138</accession>
<proteinExistence type="inferred from homology"/>
<protein>
    <recommendedName>
        <fullName>Cytochrome b</fullName>
    </recommendedName>
    <alternativeName>
        <fullName>Complex III subunit 3</fullName>
    </alternativeName>
    <alternativeName>
        <fullName>Complex III subunit III</fullName>
    </alternativeName>
    <alternativeName>
        <fullName>Cytochrome b-c1 complex subunit 3</fullName>
    </alternativeName>
    <alternativeName>
        <fullName>Ubiquinol-cytochrome-c reductase complex cytochrome b subunit</fullName>
    </alternativeName>
</protein>
<geneLocation type="mitochondrion"/>
<comment type="function">
    <text evidence="2">Component of the ubiquinol-cytochrome c reductase complex (complex III or cytochrome b-c1 complex) that is part of the mitochondrial respiratory chain. The b-c1 complex mediates electron transfer from ubiquinol to cytochrome c. Contributes to the generation of a proton gradient across the mitochondrial membrane that is then used for ATP synthesis.</text>
</comment>
<comment type="cofactor">
    <cofactor evidence="2">
        <name>heme b</name>
        <dbReference type="ChEBI" id="CHEBI:60344"/>
    </cofactor>
    <text evidence="2">Binds 2 heme b groups non-covalently.</text>
</comment>
<comment type="subunit">
    <text evidence="2">The cytochrome bc1 complex contains 11 subunits: 3 respiratory subunits (MT-CYB, CYC1 and UQCRFS1), 2 core proteins (UQCRC1 and UQCRC2) and 6 low-molecular weight proteins (UQCRH/QCR6, UQCRB/QCR7, UQCRQ/QCR8, UQCR10/QCR9, UQCR11/QCR10 and a cleavage product of UQCRFS1). This cytochrome bc1 complex then forms a dimer.</text>
</comment>
<comment type="subcellular location">
    <subcellularLocation>
        <location evidence="2">Mitochondrion inner membrane</location>
        <topology evidence="2">Multi-pass membrane protein</topology>
    </subcellularLocation>
</comment>
<comment type="miscellaneous">
    <text evidence="1">Heme 1 (or BL or b562) is low-potential and absorbs at about 562 nm, and heme 2 (or BH or b566) is high-potential and absorbs at about 566 nm.</text>
</comment>
<comment type="similarity">
    <text evidence="3 4">Belongs to the cytochrome b family.</text>
</comment>
<comment type="caution">
    <text evidence="2">The full-length protein contains only eight transmembrane helices, not nine as predicted by bioinformatics tools.</text>
</comment>
<name>CYB_FUKDA</name>
<gene>
    <name type="primary">MT-CYB</name>
    <name type="synonym">COB</name>
    <name type="synonym">CYTB</name>
    <name type="synonym">MTCYB</name>
</gene>